<gene>
    <name evidence="1" type="primary">rpsD</name>
    <name type="ordered locus">BCc_317</name>
</gene>
<accession>Q057C8</accession>
<organism>
    <name type="scientific">Buchnera aphidicola subsp. Cinara cedri (strain Cc)</name>
    <dbReference type="NCBI Taxonomy" id="372461"/>
    <lineage>
        <taxon>Bacteria</taxon>
        <taxon>Pseudomonadati</taxon>
        <taxon>Pseudomonadota</taxon>
        <taxon>Gammaproteobacteria</taxon>
        <taxon>Enterobacterales</taxon>
        <taxon>Erwiniaceae</taxon>
        <taxon>Buchnera</taxon>
    </lineage>
</organism>
<dbReference type="EMBL" id="CP000263">
    <property type="protein sequence ID" value="ABJ90771.1"/>
    <property type="molecule type" value="Genomic_DNA"/>
</dbReference>
<dbReference type="RefSeq" id="WP_011672690.1">
    <property type="nucleotide sequence ID" value="NC_008513.1"/>
</dbReference>
<dbReference type="SMR" id="Q057C8"/>
<dbReference type="STRING" id="372461.BCc_317"/>
<dbReference type="KEGG" id="bcc:BCc_317"/>
<dbReference type="eggNOG" id="COG0522">
    <property type="taxonomic scope" value="Bacteria"/>
</dbReference>
<dbReference type="HOGENOM" id="CLU_092403_0_2_6"/>
<dbReference type="OrthoDB" id="9803672at2"/>
<dbReference type="Proteomes" id="UP000000669">
    <property type="component" value="Chromosome"/>
</dbReference>
<dbReference type="GO" id="GO:0015935">
    <property type="term" value="C:small ribosomal subunit"/>
    <property type="evidence" value="ECO:0007669"/>
    <property type="project" value="InterPro"/>
</dbReference>
<dbReference type="GO" id="GO:0019843">
    <property type="term" value="F:rRNA binding"/>
    <property type="evidence" value="ECO:0007669"/>
    <property type="project" value="UniProtKB-UniRule"/>
</dbReference>
<dbReference type="GO" id="GO:0003735">
    <property type="term" value="F:structural constituent of ribosome"/>
    <property type="evidence" value="ECO:0007669"/>
    <property type="project" value="InterPro"/>
</dbReference>
<dbReference type="GO" id="GO:0042274">
    <property type="term" value="P:ribosomal small subunit biogenesis"/>
    <property type="evidence" value="ECO:0007669"/>
    <property type="project" value="TreeGrafter"/>
</dbReference>
<dbReference type="GO" id="GO:0006412">
    <property type="term" value="P:translation"/>
    <property type="evidence" value="ECO:0007669"/>
    <property type="project" value="UniProtKB-UniRule"/>
</dbReference>
<dbReference type="CDD" id="cd00165">
    <property type="entry name" value="S4"/>
    <property type="match status" value="1"/>
</dbReference>
<dbReference type="FunFam" id="1.10.1050.10:FF:000001">
    <property type="entry name" value="30S ribosomal protein S4"/>
    <property type="match status" value="1"/>
</dbReference>
<dbReference type="FunFam" id="3.10.290.10:FF:000001">
    <property type="entry name" value="30S ribosomal protein S4"/>
    <property type="match status" value="1"/>
</dbReference>
<dbReference type="Gene3D" id="1.10.1050.10">
    <property type="entry name" value="Ribosomal Protein S4 Delta 41, Chain A, domain 1"/>
    <property type="match status" value="1"/>
</dbReference>
<dbReference type="Gene3D" id="3.10.290.10">
    <property type="entry name" value="RNA-binding S4 domain"/>
    <property type="match status" value="1"/>
</dbReference>
<dbReference type="HAMAP" id="MF_01306_B">
    <property type="entry name" value="Ribosomal_uS4_B"/>
    <property type="match status" value="1"/>
</dbReference>
<dbReference type="InterPro" id="IPR022801">
    <property type="entry name" value="Ribosomal_uS4"/>
</dbReference>
<dbReference type="InterPro" id="IPR005709">
    <property type="entry name" value="Ribosomal_uS4_bac-type"/>
</dbReference>
<dbReference type="InterPro" id="IPR018079">
    <property type="entry name" value="Ribosomal_uS4_CS"/>
</dbReference>
<dbReference type="InterPro" id="IPR001912">
    <property type="entry name" value="Ribosomal_uS4_N"/>
</dbReference>
<dbReference type="InterPro" id="IPR002942">
    <property type="entry name" value="S4_RNA-bd"/>
</dbReference>
<dbReference type="InterPro" id="IPR036986">
    <property type="entry name" value="S4_RNA-bd_sf"/>
</dbReference>
<dbReference type="NCBIfam" id="NF003717">
    <property type="entry name" value="PRK05327.1"/>
    <property type="match status" value="1"/>
</dbReference>
<dbReference type="NCBIfam" id="TIGR01017">
    <property type="entry name" value="rpsD_bact"/>
    <property type="match status" value="1"/>
</dbReference>
<dbReference type="PANTHER" id="PTHR11831">
    <property type="entry name" value="30S 40S RIBOSOMAL PROTEIN"/>
    <property type="match status" value="1"/>
</dbReference>
<dbReference type="PANTHER" id="PTHR11831:SF4">
    <property type="entry name" value="SMALL RIBOSOMAL SUBUNIT PROTEIN US4M"/>
    <property type="match status" value="1"/>
</dbReference>
<dbReference type="Pfam" id="PF00163">
    <property type="entry name" value="Ribosomal_S4"/>
    <property type="match status" value="1"/>
</dbReference>
<dbReference type="Pfam" id="PF01479">
    <property type="entry name" value="S4"/>
    <property type="match status" value="1"/>
</dbReference>
<dbReference type="SMART" id="SM01390">
    <property type="entry name" value="Ribosomal_S4"/>
    <property type="match status" value="1"/>
</dbReference>
<dbReference type="SMART" id="SM00363">
    <property type="entry name" value="S4"/>
    <property type="match status" value="1"/>
</dbReference>
<dbReference type="SUPFAM" id="SSF55174">
    <property type="entry name" value="Alpha-L RNA-binding motif"/>
    <property type="match status" value="1"/>
</dbReference>
<dbReference type="PROSITE" id="PS00632">
    <property type="entry name" value="RIBOSOMAL_S4"/>
    <property type="match status" value="1"/>
</dbReference>
<dbReference type="PROSITE" id="PS50889">
    <property type="entry name" value="S4"/>
    <property type="match status" value="1"/>
</dbReference>
<keyword id="KW-1185">Reference proteome</keyword>
<keyword id="KW-0687">Ribonucleoprotein</keyword>
<keyword id="KW-0689">Ribosomal protein</keyword>
<keyword id="KW-0694">RNA-binding</keyword>
<keyword id="KW-0699">rRNA-binding</keyword>
<sequence>MAKYLGPKLKLCRRENSDLFLKSGVRTIESKCNIDQAPGQHGSRKLRLSEYAKQLREKQKLRRLYGILEKQFHNYYKKASKLKGNTGQNLLFLLESRLDNIVYRLGFGTTRLEARQLINHKSICVNNKIVSFPSFQVSIDDKISVVKKSKNQLRIKASLEIMKQKEKPSWLSIDYPNMEGVFLRSIERDDLSSDINEHLIIELYSK</sequence>
<comment type="function">
    <text evidence="1">One of the primary rRNA binding proteins, it binds directly to 16S rRNA where it nucleates assembly of the body of the 30S subunit.</text>
</comment>
<comment type="function">
    <text evidence="1">With S5 and S12 plays an important role in translational accuracy.</text>
</comment>
<comment type="subunit">
    <text evidence="1">Part of the 30S ribosomal subunit. Contacts protein S5. The interaction surface between S4 and S5 is involved in control of translational fidelity.</text>
</comment>
<comment type="similarity">
    <text evidence="1">Belongs to the universal ribosomal protein uS4 family.</text>
</comment>
<protein>
    <recommendedName>
        <fullName evidence="1">Small ribosomal subunit protein uS4</fullName>
    </recommendedName>
    <alternativeName>
        <fullName evidence="2">30S ribosomal protein S4</fullName>
    </alternativeName>
</protein>
<proteinExistence type="inferred from homology"/>
<name>RS4_BUCCC</name>
<evidence type="ECO:0000255" key="1">
    <source>
        <dbReference type="HAMAP-Rule" id="MF_01306"/>
    </source>
</evidence>
<evidence type="ECO:0000305" key="2"/>
<feature type="chain" id="PRO_0000293249" description="Small ribosomal subunit protein uS4">
    <location>
        <begin position="1"/>
        <end position="206"/>
    </location>
</feature>
<feature type="domain" description="S4 RNA-binding" evidence="1">
    <location>
        <begin position="96"/>
        <end position="156"/>
    </location>
</feature>
<reference key="1">
    <citation type="journal article" date="2006" name="Science">
        <title>A small microbial genome: the end of a long symbiotic relationship?</title>
        <authorList>
            <person name="Perez-Brocal V."/>
            <person name="Gil R."/>
            <person name="Ramos S."/>
            <person name="Lamelas A."/>
            <person name="Postigo M."/>
            <person name="Michelena J.M."/>
            <person name="Silva F.J."/>
            <person name="Moya A."/>
            <person name="Latorre A."/>
        </authorList>
    </citation>
    <scope>NUCLEOTIDE SEQUENCE [LARGE SCALE GENOMIC DNA]</scope>
    <source>
        <strain>Cc</strain>
    </source>
</reference>